<protein>
    <recommendedName>
        <fullName>Serine protease 23</fullName>
        <ecNumber>3.4.21.-</ecNumber>
    </recommendedName>
</protein>
<proteinExistence type="evidence at transcript level"/>
<organism>
    <name type="scientific">Mus musculus</name>
    <name type="common">Mouse</name>
    <dbReference type="NCBI Taxonomy" id="10090"/>
    <lineage>
        <taxon>Eukaryota</taxon>
        <taxon>Metazoa</taxon>
        <taxon>Chordata</taxon>
        <taxon>Craniata</taxon>
        <taxon>Vertebrata</taxon>
        <taxon>Euteleostomi</taxon>
        <taxon>Mammalia</taxon>
        <taxon>Eutheria</taxon>
        <taxon>Euarchontoglires</taxon>
        <taxon>Glires</taxon>
        <taxon>Rodentia</taxon>
        <taxon>Myomorpha</taxon>
        <taxon>Muroidea</taxon>
        <taxon>Muridae</taxon>
        <taxon>Murinae</taxon>
        <taxon>Mus</taxon>
        <taxon>Mus</taxon>
    </lineage>
</organism>
<accession>Q9D6X6</accession>
<accession>Q544M8</accession>
<accession>Q8VEG1</accession>
<sequence>MAGIPGLFILLVLLCVFMQVSPYTVPWKPTWPAYRLPVVLPQSTLNLAKADFDAKAKLEVSSSCGPQCHKGTPLPTYEEAKQYLSYETLYANGSRTETRVGIYILSNGEGRARGRDSEATGRSRRKRQIYGYDGRFSIFGKDFLLNYPFSTSVKLSTGCTGTLVAEKHVLTAAHCIHDGKTYVKGTQKLRVGFLKPKYKDGAGGDNSSSSAMPDKMKFQWIRVKRTHVPKGWIKGNANDIGMDYDYALLELKKPHKRQFMKIGVSPPAKQLPGGRIHFSGYDNDRPGNLVYRFCDVKDETYDLLYQQCDAQPGASGSGVYVRMWKRPQQKWERKIIGIFSGHQWVDMNGSPQDFNVAVRITPLKYAQICYWIKGNYLDCREG</sequence>
<evidence type="ECO:0000250" key="1"/>
<evidence type="ECO:0000255" key="2"/>
<evidence type="ECO:0000255" key="3">
    <source>
        <dbReference type="PROSITE-ProRule" id="PRU10078"/>
    </source>
</evidence>
<evidence type="ECO:0000305" key="4"/>
<dbReference type="EC" id="3.4.21.-"/>
<dbReference type="EMBL" id="AK009847">
    <property type="protein sequence ID" value="BAB26541.1"/>
    <property type="molecule type" value="mRNA"/>
</dbReference>
<dbReference type="EMBL" id="AK034439">
    <property type="protein sequence ID" value="BAC28708.1"/>
    <property type="molecule type" value="mRNA"/>
</dbReference>
<dbReference type="EMBL" id="AK078518">
    <property type="protein sequence ID" value="BAC37319.1"/>
    <property type="molecule type" value="mRNA"/>
</dbReference>
<dbReference type="EMBL" id="AK156348">
    <property type="protein sequence ID" value="BAE33683.1"/>
    <property type="molecule type" value="mRNA"/>
</dbReference>
<dbReference type="EMBL" id="BC018517">
    <property type="protein sequence ID" value="AAH18517.1"/>
    <property type="molecule type" value="mRNA"/>
</dbReference>
<dbReference type="CCDS" id="CCDS21442.1"/>
<dbReference type="RefSeq" id="NP_001347681.2">
    <property type="nucleotide sequence ID" value="NM_001360752.2"/>
</dbReference>
<dbReference type="RefSeq" id="NP_001347682.2">
    <property type="nucleotide sequence ID" value="NM_001360753.2"/>
</dbReference>
<dbReference type="RefSeq" id="NP_001347683.2">
    <property type="nucleotide sequence ID" value="NM_001360754.2"/>
</dbReference>
<dbReference type="RefSeq" id="NP_001347684.1">
    <property type="nucleotide sequence ID" value="NM_001360755.2"/>
</dbReference>
<dbReference type="RefSeq" id="NP_001347685.1">
    <property type="nucleotide sequence ID" value="NM_001360756.2"/>
</dbReference>
<dbReference type="RefSeq" id="NP_001371077.2">
    <property type="nucleotide sequence ID" value="NM_001384148.2"/>
</dbReference>
<dbReference type="RefSeq" id="NP_001371080.1">
    <property type="nucleotide sequence ID" value="NM_001384151.2"/>
</dbReference>
<dbReference type="RefSeq" id="NP_001402962.1">
    <property type="nucleotide sequence ID" value="NM_001416033.1"/>
</dbReference>
<dbReference type="RefSeq" id="NP_001402963.1">
    <property type="nucleotide sequence ID" value="NM_001416034.1"/>
</dbReference>
<dbReference type="RefSeq" id="NP_083890.2">
    <property type="nucleotide sequence ID" value="NM_029614.3"/>
</dbReference>
<dbReference type="RefSeq" id="XP_006508367.1">
    <property type="nucleotide sequence ID" value="XM_006508304.3"/>
</dbReference>
<dbReference type="RefSeq" id="XP_006508368.1">
    <property type="nucleotide sequence ID" value="XM_006508305.1"/>
</dbReference>
<dbReference type="RefSeq" id="XP_036009438.1">
    <property type="nucleotide sequence ID" value="XM_036153545.1"/>
</dbReference>
<dbReference type="BioGRID" id="218133">
    <property type="interactions" value="3"/>
</dbReference>
<dbReference type="FunCoup" id="Q9D6X6">
    <property type="interactions" value="544"/>
</dbReference>
<dbReference type="IntAct" id="Q9D6X6">
    <property type="interactions" value="1"/>
</dbReference>
<dbReference type="STRING" id="10090.ENSMUSP00000045191"/>
<dbReference type="GlyCosmos" id="Q9D6X6">
    <property type="glycosylation" value="2 sites, No reported glycans"/>
</dbReference>
<dbReference type="GlyGen" id="Q9D6X6">
    <property type="glycosylation" value="2 sites"/>
</dbReference>
<dbReference type="iPTMnet" id="Q9D6X6"/>
<dbReference type="PhosphoSitePlus" id="Q9D6X6"/>
<dbReference type="PaxDb" id="10090-ENSMUSP00000045191"/>
<dbReference type="PeptideAtlas" id="Q9D6X6"/>
<dbReference type="ProteomicsDB" id="291823"/>
<dbReference type="Pumba" id="Q9D6X6"/>
<dbReference type="Antibodypedia" id="31454">
    <property type="antibodies" value="71 antibodies from 20 providers"/>
</dbReference>
<dbReference type="DNASU" id="76453"/>
<dbReference type="Ensembl" id="ENSMUST00000041761.7">
    <property type="protein sequence ID" value="ENSMUSP00000045191.6"/>
    <property type="gene ID" value="ENSMUSG00000039405.8"/>
</dbReference>
<dbReference type="Ensembl" id="ENSMUST00000207932.2">
    <property type="protein sequence ID" value="ENSMUSP00000147183.2"/>
    <property type="gene ID" value="ENSMUSG00000039405.8"/>
</dbReference>
<dbReference type="GeneID" id="76453"/>
<dbReference type="KEGG" id="mmu:76453"/>
<dbReference type="UCSC" id="uc009ifz.1">
    <property type="organism name" value="mouse"/>
</dbReference>
<dbReference type="AGR" id="MGI:1923703"/>
<dbReference type="CTD" id="11098"/>
<dbReference type="MGI" id="MGI:1923703">
    <property type="gene designation" value="Prss23"/>
</dbReference>
<dbReference type="VEuPathDB" id="HostDB:ENSMUSG00000039405"/>
<dbReference type="eggNOG" id="ENOG502QTW6">
    <property type="taxonomic scope" value="Eukaryota"/>
</dbReference>
<dbReference type="GeneTree" id="ENSGT00390000000155"/>
<dbReference type="HOGENOM" id="CLU_055829_0_0_1"/>
<dbReference type="InParanoid" id="Q9D6X6"/>
<dbReference type="OMA" id="WIKGNFM"/>
<dbReference type="OrthoDB" id="10037376at2759"/>
<dbReference type="PhylomeDB" id="Q9D6X6"/>
<dbReference type="TreeFam" id="TF329011"/>
<dbReference type="Reactome" id="R-MMU-381426">
    <property type="pathway name" value="Regulation of Insulin-like Growth Factor (IGF) transport and uptake by Insulin-like Growth Factor Binding Proteins (IGFBPs)"/>
</dbReference>
<dbReference type="Reactome" id="R-MMU-8957275">
    <property type="pathway name" value="Post-translational protein phosphorylation"/>
</dbReference>
<dbReference type="BioGRID-ORCS" id="76453">
    <property type="hits" value="3 hits in 79 CRISPR screens"/>
</dbReference>
<dbReference type="PRO" id="PR:Q9D6X6"/>
<dbReference type="Proteomes" id="UP000000589">
    <property type="component" value="Chromosome 7"/>
</dbReference>
<dbReference type="RNAct" id="Q9D6X6">
    <property type="molecule type" value="protein"/>
</dbReference>
<dbReference type="Bgee" id="ENSMUSG00000039405">
    <property type="expression patterns" value="Expressed in endothelial cell of lymphatic vessel and 258 other cell types or tissues"/>
</dbReference>
<dbReference type="ExpressionAtlas" id="Q9D6X6">
    <property type="expression patterns" value="baseline and differential"/>
</dbReference>
<dbReference type="GO" id="GO:0005615">
    <property type="term" value="C:extracellular space"/>
    <property type="evidence" value="ECO:0007005"/>
    <property type="project" value="BHF-UCL"/>
</dbReference>
<dbReference type="GO" id="GO:0005634">
    <property type="term" value="C:nucleus"/>
    <property type="evidence" value="ECO:0007669"/>
    <property type="project" value="Ensembl"/>
</dbReference>
<dbReference type="GO" id="GO:0004252">
    <property type="term" value="F:serine-type endopeptidase activity"/>
    <property type="evidence" value="ECO:0007669"/>
    <property type="project" value="InterPro"/>
</dbReference>
<dbReference type="GO" id="GO:0006508">
    <property type="term" value="P:proteolysis"/>
    <property type="evidence" value="ECO:0007669"/>
    <property type="project" value="UniProtKB-KW"/>
</dbReference>
<dbReference type="FunFam" id="2.40.10.10:FF:000040">
    <property type="entry name" value="Serine protease 23"/>
    <property type="match status" value="1"/>
</dbReference>
<dbReference type="FunFam" id="2.40.10.10:FF:000048">
    <property type="entry name" value="serine protease 23"/>
    <property type="match status" value="1"/>
</dbReference>
<dbReference type="Gene3D" id="2.40.10.10">
    <property type="entry name" value="Trypsin-like serine proteases"/>
    <property type="match status" value="2"/>
</dbReference>
<dbReference type="InterPro" id="IPR050966">
    <property type="entry name" value="Glutamyl_endopeptidase"/>
</dbReference>
<dbReference type="InterPro" id="IPR009003">
    <property type="entry name" value="Peptidase_S1_PA"/>
</dbReference>
<dbReference type="InterPro" id="IPR043504">
    <property type="entry name" value="Peptidase_S1_PA_chymotrypsin"/>
</dbReference>
<dbReference type="InterPro" id="IPR001254">
    <property type="entry name" value="Trypsin_dom"/>
</dbReference>
<dbReference type="InterPro" id="IPR018114">
    <property type="entry name" value="TRYPSIN_HIS"/>
</dbReference>
<dbReference type="PANTHER" id="PTHR15462">
    <property type="entry name" value="SERINE PROTEASE"/>
    <property type="match status" value="1"/>
</dbReference>
<dbReference type="PANTHER" id="PTHR15462:SF10">
    <property type="entry name" value="SERINE PROTEASE 23"/>
    <property type="match status" value="1"/>
</dbReference>
<dbReference type="Pfam" id="PF00089">
    <property type="entry name" value="Trypsin"/>
    <property type="match status" value="1"/>
</dbReference>
<dbReference type="SUPFAM" id="SSF50494">
    <property type="entry name" value="Trypsin-like serine proteases"/>
    <property type="match status" value="1"/>
</dbReference>
<dbReference type="PROSITE" id="PS00134">
    <property type="entry name" value="TRYPSIN_HIS"/>
    <property type="match status" value="1"/>
</dbReference>
<keyword id="KW-1015">Disulfide bond</keyword>
<keyword id="KW-0325">Glycoprotein</keyword>
<keyword id="KW-0378">Hydrolase</keyword>
<keyword id="KW-0645">Protease</keyword>
<keyword id="KW-1185">Reference proteome</keyword>
<keyword id="KW-0964">Secreted</keyword>
<keyword id="KW-0720">Serine protease</keyword>
<keyword id="KW-0732">Signal</keyword>
<reference key="1">
    <citation type="journal article" date="2005" name="Science">
        <title>The transcriptional landscape of the mammalian genome.</title>
        <authorList>
            <person name="Carninci P."/>
            <person name="Kasukawa T."/>
            <person name="Katayama S."/>
            <person name="Gough J."/>
            <person name="Frith M.C."/>
            <person name="Maeda N."/>
            <person name="Oyama R."/>
            <person name="Ravasi T."/>
            <person name="Lenhard B."/>
            <person name="Wells C."/>
            <person name="Kodzius R."/>
            <person name="Shimokawa K."/>
            <person name="Bajic V.B."/>
            <person name="Brenner S.E."/>
            <person name="Batalov S."/>
            <person name="Forrest A.R."/>
            <person name="Zavolan M."/>
            <person name="Davis M.J."/>
            <person name="Wilming L.G."/>
            <person name="Aidinis V."/>
            <person name="Allen J.E."/>
            <person name="Ambesi-Impiombato A."/>
            <person name="Apweiler R."/>
            <person name="Aturaliya R.N."/>
            <person name="Bailey T.L."/>
            <person name="Bansal M."/>
            <person name="Baxter L."/>
            <person name="Beisel K.W."/>
            <person name="Bersano T."/>
            <person name="Bono H."/>
            <person name="Chalk A.M."/>
            <person name="Chiu K.P."/>
            <person name="Choudhary V."/>
            <person name="Christoffels A."/>
            <person name="Clutterbuck D.R."/>
            <person name="Crowe M.L."/>
            <person name="Dalla E."/>
            <person name="Dalrymple B.P."/>
            <person name="de Bono B."/>
            <person name="Della Gatta G."/>
            <person name="di Bernardo D."/>
            <person name="Down T."/>
            <person name="Engstrom P."/>
            <person name="Fagiolini M."/>
            <person name="Faulkner G."/>
            <person name="Fletcher C.F."/>
            <person name="Fukushima T."/>
            <person name="Furuno M."/>
            <person name="Futaki S."/>
            <person name="Gariboldi M."/>
            <person name="Georgii-Hemming P."/>
            <person name="Gingeras T.R."/>
            <person name="Gojobori T."/>
            <person name="Green R.E."/>
            <person name="Gustincich S."/>
            <person name="Harbers M."/>
            <person name="Hayashi Y."/>
            <person name="Hensch T.K."/>
            <person name="Hirokawa N."/>
            <person name="Hill D."/>
            <person name="Huminiecki L."/>
            <person name="Iacono M."/>
            <person name="Ikeo K."/>
            <person name="Iwama A."/>
            <person name="Ishikawa T."/>
            <person name="Jakt M."/>
            <person name="Kanapin A."/>
            <person name="Katoh M."/>
            <person name="Kawasawa Y."/>
            <person name="Kelso J."/>
            <person name="Kitamura H."/>
            <person name="Kitano H."/>
            <person name="Kollias G."/>
            <person name="Krishnan S.P."/>
            <person name="Kruger A."/>
            <person name="Kummerfeld S.K."/>
            <person name="Kurochkin I.V."/>
            <person name="Lareau L.F."/>
            <person name="Lazarevic D."/>
            <person name="Lipovich L."/>
            <person name="Liu J."/>
            <person name="Liuni S."/>
            <person name="McWilliam S."/>
            <person name="Madan Babu M."/>
            <person name="Madera M."/>
            <person name="Marchionni L."/>
            <person name="Matsuda H."/>
            <person name="Matsuzawa S."/>
            <person name="Miki H."/>
            <person name="Mignone F."/>
            <person name="Miyake S."/>
            <person name="Morris K."/>
            <person name="Mottagui-Tabar S."/>
            <person name="Mulder N."/>
            <person name="Nakano N."/>
            <person name="Nakauchi H."/>
            <person name="Ng P."/>
            <person name="Nilsson R."/>
            <person name="Nishiguchi S."/>
            <person name="Nishikawa S."/>
            <person name="Nori F."/>
            <person name="Ohara O."/>
            <person name="Okazaki Y."/>
            <person name="Orlando V."/>
            <person name="Pang K.C."/>
            <person name="Pavan W.J."/>
            <person name="Pavesi G."/>
            <person name="Pesole G."/>
            <person name="Petrovsky N."/>
            <person name="Piazza S."/>
            <person name="Reed J."/>
            <person name="Reid J.F."/>
            <person name="Ring B.Z."/>
            <person name="Ringwald M."/>
            <person name="Rost B."/>
            <person name="Ruan Y."/>
            <person name="Salzberg S.L."/>
            <person name="Sandelin A."/>
            <person name="Schneider C."/>
            <person name="Schoenbach C."/>
            <person name="Sekiguchi K."/>
            <person name="Semple C.A."/>
            <person name="Seno S."/>
            <person name="Sessa L."/>
            <person name="Sheng Y."/>
            <person name="Shibata Y."/>
            <person name="Shimada H."/>
            <person name="Shimada K."/>
            <person name="Silva D."/>
            <person name="Sinclair B."/>
            <person name="Sperling S."/>
            <person name="Stupka E."/>
            <person name="Sugiura K."/>
            <person name="Sultana R."/>
            <person name="Takenaka Y."/>
            <person name="Taki K."/>
            <person name="Tammoja K."/>
            <person name="Tan S.L."/>
            <person name="Tang S."/>
            <person name="Taylor M.S."/>
            <person name="Tegner J."/>
            <person name="Teichmann S.A."/>
            <person name="Ueda H.R."/>
            <person name="van Nimwegen E."/>
            <person name="Verardo R."/>
            <person name="Wei C.L."/>
            <person name="Yagi K."/>
            <person name="Yamanishi H."/>
            <person name="Zabarovsky E."/>
            <person name="Zhu S."/>
            <person name="Zimmer A."/>
            <person name="Hide W."/>
            <person name="Bult C."/>
            <person name="Grimmond S.M."/>
            <person name="Teasdale R.D."/>
            <person name="Liu E.T."/>
            <person name="Brusic V."/>
            <person name="Quackenbush J."/>
            <person name="Wahlestedt C."/>
            <person name="Mattick J.S."/>
            <person name="Hume D.A."/>
            <person name="Kai C."/>
            <person name="Sasaki D."/>
            <person name="Tomaru Y."/>
            <person name="Fukuda S."/>
            <person name="Kanamori-Katayama M."/>
            <person name="Suzuki M."/>
            <person name="Aoki J."/>
            <person name="Arakawa T."/>
            <person name="Iida J."/>
            <person name="Imamura K."/>
            <person name="Itoh M."/>
            <person name="Kato T."/>
            <person name="Kawaji H."/>
            <person name="Kawagashira N."/>
            <person name="Kawashima T."/>
            <person name="Kojima M."/>
            <person name="Kondo S."/>
            <person name="Konno H."/>
            <person name="Nakano K."/>
            <person name="Ninomiya N."/>
            <person name="Nishio T."/>
            <person name="Okada M."/>
            <person name="Plessy C."/>
            <person name="Shibata K."/>
            <person name="Shiraki T."/>
            <person name="Suzuki S."/>
            <person name="Tagami M."/>
            <person name="Waki K."/>
            <person name="Watahiki A."/>
            <person name="Okamura-Oho Y."/>
            <person name="Suzuki H."/>
            <person name="Kawai J."/>
            <person name="Hayashizaki Y."/>
        </authorList>
    </citation>
    <scope>NUCLEOTIDE SEQUENCE [LARGE SCALE MRNA]</scope>
    <source>
        <strain>C57BL/6J</strain>
        <strain>NOD</strain>
        <tissue>Diencephalon</tissue>
        <tissue>Spleen</tissue>
        <tissue>Tongue</tissue>
    </source>
</reference>
<reference key="2">
    <citation type="journal article" date="2004" name="Genome Res.">
        <title>The status, quality, and expansion of the NIH full-length cDNA project: the Mammalian Gene Collection (MGC).</title>
        <authorList>
            <consortium name="The MGC Project Team"/>
        </authorList>
    </citation>
    <scope>NUCLEOTIDE SEQUENCE [LARGE SCALE MRNA]</scope>
    <source>
        <tissue>Mammary tumor</tissue>
    </source>
</reference>
<comment type="subcellular location">
    <subcellularLocation>
        <location evidence="4">Secreted</location>
    </subcellularLocation>
</comment>
<comment type="similarity">
    <text evidence="4">Belongs to the peptidase S1 family.</text>
</comment>
<feature type="signal peptide" evidence="2">
    <location>
        <begin position="1"/>
        <end position="22"/>
    </location>
</feature>
<feature type="chain" id="PRO_0000027848" description="Serine protease 23">
    <location>
        <begin position="23"/>
        <end position="382"/>
    </location>
</feature>
<feature type="active site" description="Charge relay system" evidence="3">
    <location>
        <position position="174"/>
    </location>
</feature>
<feature type="active site" description="Charge relay system" evidence="3">
    <location>
        <position position="239"/>
    </location>
</feature>
<feature type="active site" description="Charge relay system" evidence="3">
    <location>
        <position position="315"/>
    </location>
</feature>
<feature type="glycosylation site" description="N-linked (GlcNAc...) asparagine" evidence="2">
    <location>
        <position position="92"/>
    </location>
</feature>
<feature type="glycosylation site" description="N-linked (GlcNAc...) asparagine" evidence="2">
    <location>
        <position position="206"/>
    </location>
</feature>
<feature type="disulfide bond" evidence="1">
    <location>
        <begin position="159"/>
        <end position="175"/>
    </location>
</feature>
<feature type="sequence conflict" description="In Ref. 1; BAB26541." evidence="4" ref="1">
    <original>M</original>
    <variation>I</variation>
    <location>
        <position position="260"/>
    </location>
</feature>
<name>PRS23_MOUSE</name>
<gene>
    <name type="primary">Prss23</name>
</gene>